<comment type="function">
    <text evidence="1">Catalyzes the ferrous insertion into protoporphyrin IX.</text>
</comment>
<comment type="catalytic activity">
    <reaction evidence="1">
        <text>heme b + 2 H(+) = protoporphyrin IX + Fe(2+)</text>
        <dbReference type="Rhea" id="RHEA:22584"/>
        <dbReference type="ChEBI" id="CHEBI:15378"/>
        <dbReference type="ChEBI" id="CHEBI:29033"/>
        <dbReference type="ChEBI" id="CHEBI:57306"/>
        <dbReference type="ChEBI" id="CHEBI:60344"/>
        <dbReference type="EC" id="4.98.1.1"/>
    </reaction>
</comment>
<comment type="pathway">
    <text evidence="1">Porphyrin-containing compound metabolism; protoheme biosynthesis; protoheme from protoporphyrin-IX: step 1/1.</text>
</comment>
<comment type="subcellular location">
    <subcellularLocation>
        <location evidence="1">Cytoplasm</location>
    </subcellularLocation>
</comment>
<comment type="similarity">
    <text evidence="1">Belongs to the ferrochelatase family.</text>
</comment>
<protein>
    <recommendedName>
        <fullName evidence="1">Ferrochelatase</fullName>
        <ecNumber evidence="1">4.98.1.1</ecNumber>
    </recommendedName>
    <alternativeName>
        <fullName evidence="1">Heme synthase</fullName>
    </alternativeName>
    <alternativeName>
        <fullName evidence="1">Protoheme ferro-lyase</fullName>
    </alternativeName>
</protein>
<evidence type="ECO:0000255" key="1">
    <source>
        <dbReference type="HAMAP-Rule" id="MF_00323"/>
    </source>
</evidence>
<organism>
    <name type="scientific">Pseudomonas fluorescens (strain ATCC BAA-477 / NRRL B-23932 / Pf-5)</name>
    <dbReference type="NCBI Taxonomy" id="220664"/>
    <lineage>
        <taxon>Bacteria</taxon>
        <taxon>Pseudomonadati</taxon>
        <taxon>Pseudomonadota</taxon>
        <taxon>Gammaproteobacteria</taxon>
        <taxon>Pseudomonadales</taxon>
        <taxon>Pseudomonadaceae</taxon>
        <taxon>Pseudomonas</taxon>
    </lineage>
</organism>
<keyword id="KW-0963">Cytoplasm</keyword>
<keyword id="KW-0350">Heme biosynthesis</keyword>
<keyword id="KW-0408">Iron</keyword>
<keyword id="KW-0456">Lyase</keyword>
<keyword id="KW-0479">Metal-binding</keyword>
<keyword id="KW-0627">Porphyrin biosynthesis</keyword>
<dbReference type="EC" id="4.98.1.1" evidence="1"/>
<dbReference type="EMBL" id="CP000076">
    <property type="protein sequence ID" value="AAY94363.1"/>
    <property type="molecule type" value="Genomic_DNA"/>
</dbReference>
<dbReference type="RefSeq" id="WP_011063388.1">
    <property type="nucleotide sequence ID" value="NC_004129.6"/>
</dbReference>
<dbReference type="SMR" id="Q4K6B3"/>
<dbReference type="STRING" id="220664.PFL_5141"/>
<dbReference type="KEGG" id="pfl:PFL_5141"/>
<dbReference type="PATRIC" id="fig|220664.5.peg.5254"/>
<dbReference type="eggNOG" id="COG0276">
    <property type="taxonomic scope" value="Bacteria"/>
</dbReference>
<dbReference type="HOGENOM" id="CLU_018884_0_1_6"/>
<dbReference type="UniPathway" id="UPA00252">
    <property type="reaction ID" value="UER00325"/>
</dbReference>
<dbReference type="Proteomes" id="UP000008540">
    <property type="component" value="Chromosome"/>
</dbReference>
<dbReference type="GO" id="GO:0005737">
    <property type="term" value="C:cytoplasm"/>
    <property type="evidence" value="ECO:0007669"/>
    <property type="project" value="UniProtKB-SubCell"/>
</dbReference>
<dbReference type="GO" id="GO:0004325">
    <property type="term" value="F:ferrochelatase activity"/>
    <property type="evidence" value="ECO:0007669"/>
    <property type="project" value="UniProtKB-UniRule"/>
</dbReference>
<dbReference type="GO" id="GO:0046872">
    <property type="term" value="F:metal ion binding"/>
    <property type="evidence" value="ECO:0007669"/>
    <property type="project" value="UniProtKB-KW"/>
</dbReference>
<dbReference type="GO" id="GO:0006783">
    <property type="term" value="P:heme biosynthetic process"/>
    <property type="evidence" value="ECO:0007669"/>
    <property type="project" value="UniProtKB-UniRule"/>
</dbReference>
<dbReference type="CDD" id="cd00419">
    <property type="entry name" value="Ferrochelatase_C"/>
    <property type="match status" value="1"/>
</dbReference>
<dbReference type="CDD" id="cd03411">
    <property type="entry name" value="Ferrochelatase_N"/>
    <property type="match status" value="1"/>
</dbReference>
<dbReference type="Gene3D" id="3.40.50.1400">
    <property type="match status" value="2"/>
</dbReference>
<dbReference type="HAMAP" id="MF_00323">
    <property type="entry name" value="Ferrochelatase"/>
    <property type="match status" value="1"/>
</dbReference>
<dbReference type="InterPro" id="IPR001015">
    <property type="entry name" value="Ferrochelatase"/>
</dbReference>
<dbReference type="InterPro" id="IPR033644">
    <property type="entry name" value="Ferrochelatase_C"/>
</dbReference>
<dbReference type="InterPro" id="IPR033659">
    <property type="entry name" value="Ferrochelatase_N"/>
</dbReference>
<dbReference type="NCBIfam" id="TIGR00109">
    <property type="entry name" value="hemH"/>
    <property type="match status" value="1"/>
</dbReference>
<dbReference type="PANTHER" id="PTHR11108">
    <property type="entry name" value="FERROCHELATASE"/>
    <property type="match status" value="1"/>
</dbReference>
<dbReference type="PANTHER" id="PTHR11108:SF1">
    <property type="entry name" value="FERROCHELATASE, MITOCHONDRIAL"/>
    <property type="match status" value="1"/>
</dbReference>
<dbReference type="Pfam" id="PF00762">
    <property type="entry name" value="Ferrochelatase"/>
    <property type="match status" value="1"/>
</dbReference>
<dbReference type="SUPFAM" id="SSF53800">
    <property type="entry name" value="Chelatase"/>
    <property type="match status" value="1"/>
</dbReference>
<accession>Q4K6B3</accession>
<name>HEMH_PSEF5</name>
<feature type="chain" id="PRO_1000019347" description="Ferrochelatase">
    <location>
        <begin position="1"/>
        <end position="340"/>
    </location>
</feature>
<feature type="binding site" evidence="1">
    <location>
        <position position="189"/>
    </location>
    <ligand>
        <name>Fe cation</name>
        <dbReference type="ChEBI" id="CHEBI:24875"/>
    </ligand>
</feature>
<feature type="binding site" evidence="1">
    <location>
        <position position="292"/>
    </location>
    <ligand>
        <name>Fe cation</name>
        <dbReference type="ChEBI" id="CHEBI:24875"/>
    </ligand>
</feature>
<proteinExistence type="inferred from homology"/>
<reference key="1">
    <citation type="journal article" date="2005" name="Nat. Biotechnol.">
        <title>Complete genome sequence of the plant commensal Pseudomonas fluorescens Pf-5.</title>
        <authorList>
            <person name="Paulsen I.T."/>
            <person name="Press C.M."/>
            <person name="Ravel J."/>
            <person name="Kobayashi D.Y."/>
            <person name="Myers G.S.A."/>
            <person name="Mavrodi D.V."/>
            <person name="DeBoy R.T."/>
            <person name="Seshadri R."/>
            <person name="Ren Q."/>
            <person name="Madupu R."/>
            <person name="Dodson R.J."/>
            <person name="Durkin A.S."/>
            <person name="Brinkac L.M."/>
            <person name="Daugherty S.C."/>
            <person name="Sullivan S.A."/>
            <person name="Rosovitz M.J."/>
            <person name="Gwinn M.L."/>
            <person name="Zhou L."/>
            <person name="Schneider D.J."/>
            <person name="Cartinhour S.W."/>
            <person name="Nelson W.C."/>
            <person name="Weidman J."/>
            <person name="Watkins K."/>
            <person name="Tran K."/>
            <person name="Khouri H."/>
            <person name="Pierson E.A."/>
            <person name="Pierson L.S. III"/>
            <person name="Thomashow L.S."/>
            <person name="Loper J.E."/>
        </authorList>
    </citation>
    <scope>NUCLEOTIDE SEQUENCE [LARGE SCALE GENOMIC DNA]</scope>
    <source>
        <strain>ATCC BAA-477 / NRRL B-23932 / Pf-5</strain>
    </source>
</reference>
<gene>
    <name evidence="1" type="primary">hemH</name>
    <name type="ordered locus">PFL_5141</name>
</gene>
<sequence length="340" mass="38273">MTDHALLLVNLGSPASTSVADVRSYLNQFLMDPYVIDLPWPVRRLLVSLILIKRPEQSAHAYASIWWEEGSPLVVLSRRLQKVMSEQWKQGPVELAMRYGEPSIESVLLKLVAQGQRKITLAPLYPQFADSTVTTVVEEARRVVREHKLDVQFSVLQPFYDQPEYIEALEASTRPHLQQPFDHLLLSFHGLPERHLNKLNPGHSLDGAGDCCAESSPQVLANCYRGQCFRTARAFAQQMGLADGQWSVSFQSRLGRAKWIEPYTEARLDELGKQGVKKLLVMCPAFVADCIETLEEIGDRGREQFREAGGEELVLIPCLNDDPQWAKALNALCERAPLAL</sequence>